<keyword id="KW-0963">Cytoplasm</keyword>
<keyword id="KW-0446">Lipid-binding</keyword>
<keyword id="KW-0813">Transport</keyword>
<proteinExistence type="evidence at transcript level"/>
<sequence length="127" mass="13950">MLFSGKYQLESQENFEAFRKAIGLPDELIQKGKDIKSISEIEENGDDFKVTITTGSKVIVNTFTVGKEAELETLTGEKAKGVVHRDGNKLKVSLKGIESVTELVDGNTIANTMTLGNIGYKRISKRV</sequence>
<dbReference type="EMBL" id="AF501663">
    <property type="protein sequence ID" value="AAM22208.1"/>
    <property type="molecule type" value="mRNA"/>
</dbReference>
<dbReference type="SMR" id="Q8JJ04"/>
<dbReference type="GO" id="GO:0005737">
    <property type="term" value="C:cytoplasm"/>
    <property type="evidence" value="ECO:0007669"/>
    <property type="project" value="UniProtKB-SubCell"/>
</dbReference>
<dbReference type="GO" id="GO:0008289">
    <property type="term" value="F:lipid binding"/>
    <property type="evidence" value="ECO:0007669"/>
    <property type="project" value="UniProtKB-KW"/>
</dbReference>
<dbReference type="CDD" id="cd19444">
    <property type="entry name" value="FABP1"/>
    <property type="match status" value="1"/>
</dbReference>
<dbReference type="FunFam" id="2.40.128.20:FF:000006">
    <property type="entry name" value="Fatty acid-binding protein, liver"/>
    <property type="match status" value="1"/>
</dbReference>
<dbReference type="Gene3D" id="2.40.128.20">
    <property type="match status" value="1"/>
</dbReference>
<dbReference type="InterPro" id="IPR012674">
    <property type="entry name" value="Calycin"/>
</dbReference>
<dbReference type="InterPro" id="IPR000463">
    <property type="entry name" value="Fatty_acid-bd"/>
</dbReference>
<dbReference type="InterPro" id="IPR031259">
    <property type="entry name" value="ILBP"/>
</dbReference>
<dbReference type="PANTHER" id="PTHR11955">
    <property type="entry name" value="FATTY ACID BINDING PROTEIN"/>
    <property type="match status" value="1"/>
</dbReference>
<dbReference type="Pfam" id="PF14651">
    <property type="entry name" value="Lipocalin_7"/>
    <property type="match status" value="1"/>
</dbReference>
<dbReference type="PRINTS" id="PR00178">
    <property type="entry name" value="FATTYACIDBP"/>
</dbReference>
<dbReference type="SUPFAM" id="SSF50814">
    <property type="entry name" value="Lipocalins"/>
    <property type="match status" value="1"/>
</dbReference>
<gene>
    <name type="primary">fabp1</name>
</gene>
<accession>Q8JJ04</accession>
<evidence type="ECO:0000305" key="1"/>
<organism>
    <name type="scientific">Epinephelus coioides</name>
    <name type="common">Orange-spotted grouper</name>
    <name type="synonym">Epinephelus nebulosus</name>
    <dbReference type="NCBI Taxonomy" id="94232"/>
    <lineage>
        <taxon>Eukaryota</taxon>
        <taxon>Metazoa</taxon>
        <taxon>Chordata</taxon>
        <taxon>Craniata</taxon>
        <taxon>Vertebrata</taxon>
        <taxon>Euteleostomi</taxon>
        <taxon>Actinopterygii</taxon>
        <taxon>Neopterygii</taxon>
        <taxon>Teleostei</taxon>
        <taxon>Neoteleostei</taxon>
        <taxon>Acanthomorphata</taxon>
        <taxon>Eupercaria</taxon>
        <taxon>Perciformes</taxon>
        <taxon>Serranoidei</taxon>
        <taxon>Serranidae</taxon>
        <taxon>Epinephelinae</taxon>
        <taxon>Epinephelini</taxon>
        <taxon>Epinephelus</taxon>
    </lineage>
</organism>
<protein>
    <recommendedName>
        <fullName>Fatty acid-binding protein, liver-type</fullName>
    </recommendedName>
    <alternativeName>
        <fullName>Fatty acid-binding protein 1</fullName>
    </alternativeName>
    <alternativeName>
        <fullName>Liver-type fatty acid-binding protein</fullName>
        <shortName>L-FABP</shortName>
    </alternativeName>
</protein>
<feature type="chain" id="PRO_0000300627" description="Fatty acid-binding protein, liver-type">
    <location>
        <begin position="1"/>
        <end position="127"/>
    </location>
</feature>
<reference key="1">
    <citation type="submission" date="2002-04" db="EMBL/GenBank/DDBJ databases">
        <title>Changes of mRNA expression of fatty acid binding protein in the ovary of Epinephelus coioides.</title>
        <authorList>
            <person name="Zhang W."/>
            <person name="Zhang Y."/>
            <person name="Zhang L."/>
            <person name="Lin H."/>
        </authorList>
    </citation>
    <scope>NUCLEOTIDE SEQUENCE [MRNA]</scope>
    <source>
        <tissue>Ovary</tissue>
    </source>
</reference>
<name>FABPL_EPICO</name>
<comment type="subcellular location">
    <subcellularLocation>
        <location evidence="1">Cytoplasm</location>
    </subcellularLocation>
</comment>
<comment type="similarity">
    <text evidence="1">Belongs to the calycin superfamily. Fatty-acid binding protein (FABP) family.</text>
</comment>